<comment type="function">
    <text evidence="1">Catalyzes the formation of 2'O-methylated cytidine (Cm32) or 2'O-methylated uridine (Um32) at position 32 in tRNA.</text>
</comment>
<comment type="catalytic activity">
    <reaction evidence="1">
        <text>cytidine(32) in tRNA + S-adenosyl-L-methionine = 2'-O-methylcytidine(32) in tRNA + S-adenosyl-L-homocysteine + H(+)</text>
        <dbReference type="Rhea" id="RHEA:42932"/>
        <dbReference type="Rhea" id="RHEA-COMP:10288"/>
        <dbReference type="Rhea" id="RHEA-COMP:10289"/>
        <dbReference type="ChEBI" id="CHEBI:15378"/>
        <dbReference type="ChEBI" id="CHEBI:57856"/>
        <dbReference type="ChEBI" id="CHEBI:59789"/>
        <dbReference type="ChEBI" id="CHEBI:74495"/>
        <dbReference type="ChEBI" id="CHEBI:82748"/>
        <dbReference type="EC" id="2.1.1.200"/>
    </reaction>
</comment>
<comment type="catalytic activity">
    <reaction evidence="1">
        <text>uridine(32) in tRNA + S-adenosyl-L-methionine = 2'-O-methyluridine(32) in tRNA + S-adenosyl-L-homocysteine + H(+)</text>
        <dbReference type="Rhea" id="RHEA:42936"/>
        <dbReference type="Rhea" id="RHEA-COMP:10107"/>
        <dbReference type="Rhea" id="RHEA-COMP:10290"/>
        <dbReference type="ChEBI" id="CHEBI:15378"/>
        <dbReference type="ChEBI" id="CHEBI:57856"/>
        <dbReference type="ChEBI" id="CHEBI:59789"/>
        <dbReference type="ChEBI" id="CHEBI:65315"/>
        <dbReference type="ChEBI" id="CHEBI:74478"/>
        <dbReference type="EC" id="2.1.1.200"/>
    </reaction>
</comment>
<comment type="subunit">
    <text evidence="1">Homodimer.</text>
</comment>
<comment type="subcellular location">
    <subcellularLocation>
        <location evidence="1">Cytoplasm</location>
    </subcellularLocation>
</comment>
<comment type="similarity">
    <text evidence="2">Belongs to the class IV-like SAM-binding methyltransferase superfamily. RNA methyltransferase TrmH family.</text>
</comment>
<proteinExistence type="inferred from homology"/>
<feature type="chain" id="PRO_0000313859" description="tRNA (cytidine/uridine-2'-O-)-methyltransferase TrmJ">
    <location>
        <begin position="1"/>
        <end position="243"/>
    </location>
</feature>
<feature type="binding site" evidence="1">
    <location>
        <begin position="79"/>
        <end position="81"/>
    </location>
    <ligand>
        <name>S-adenosyl-L-methionine</name>
        <dbReference type="ChEBI" id="CHEBI:59789"/>
    </ligand>
</feature>
<feature type="binding site" evidence="1">
    <location>
        <position position="114"/>
    </location>
    <ligand>
        <name>S-adenosyl-L-methionine</name>
        <dbReference type="ChEBI" id="CHEBI:59789"/>
    </ligand>
</feature>
<feature type="binding site" evidence="1">
    <location>
        <position position="134"/>
    </location>
    <ligand>
        <name>S-adenosyl-L-methionine</name>
        <dbReference type="ChEBI" id="CHEBI:59789"/>
    </ligand>
</feature>
<feature type="binding site" evidence="1">
    <location>
        <begin position="141"/>
        <end position="143"/>
    </location>
    <ligand>
        <name>S-adenosyl-L-methionine</name>
        <dbReference type="ChEBI" id="CHEBI:59789"/>
    </ligand>
</feature>
<dbReference type="EC" id="2.1.1.200" evidence="1"/>
<dbReference type="EMBL" id="AE017220">
    <property type="protein sequence ID" value="AAX66445.1"/>
    <property type="molecule type" value="Genomic_DNA"/>
</dbReference>
<dbReference type="RefSeq" id="WP_000940031.1">
    <property type="nucleotide sequence ID" value="NC_006905.1"/>
</dbReference>
<dbReference type="SMR" id="Q57LG7"/>
<dbReference type="KEGG" id="sec:SCH_2539"/>
<dbReference type="HOGENOM" id="CLU_056931_0_1_6"/>
<dbReference type="Proteomes" id="UP000000538">
    <property type="component" value="Chromosome"/>
</dbReference>
<dbReference type="GO" id="GO:0005829">
    <property type="term" value="C:cytosol"/>
    <property type="evidence" value="ECO:0007669"/>
    <property type="project" value="TreeGrafter"/>
</dbReference>
<dbReference type="GO" id="GO:0003723">
    <property type="term" value="F:RNA binding"/>
    <property type="evidence" value="ECO:0007669"/>
    <property type="project" value="InterPro"/>
</dbReference>
<dbReference type="GO" id="GO:0160206">
    <property type="term" value="F:tRNA (cytidine(32)/uridine(32)-2'-O)-methyltransferase activity"/>
    <property type="evidence" value="ECO:0007669"/>
    <property type="project" value="UniProtKB-EC"/>
</dbReference>
<dbReference type="GO" id="GO:0002128">
    <property type="term" value="P:tRNA nucleoside ribose methylation"/>
    <property type="evidence" value="ECO:0007669"/>
    <property type="project" value="TreeGrafter"/>
</dbReference>
<dbReference type="CDD" id="cd18093">
    <property type="entry name" value="SpoU-like_TrmJ"/>
    <property type="match status" value="1"/>
</dbReference>
<dbReference type="FunFam" id="1.10.8.590:FF:000001">
    <property type="entry name" value="tRNA:Cm32/Um32 methyltransferase"/>
    <property type="match status" value="1"/>
</dbReference>
<dbReference type="FunFam" id="3.40.1280.10:FF:000006">
    <property type="entry name" value="Uncharacterized tRNA/rRNA methyltransferase HI_0380"/>
    <property type="match status" value="1"/>
</dbReference>
<dbReference type="Gene3D" id="1.10.8.590">
    <property type="match status" value="1"/>
</dbReference>
<dbReference type="Gene3D" id="3.40.1280.10">
    <property type="match status" value="1"/>
</dbReference>
<dbReference type="InterPro" id="IPR029028">
    <property type="entry name" value="Alpha/beta_knot_MTases"/>
</dbReference>
<dbReference type="InterPro" id="IPR004384">
    <property type="entry name" value="RNA_MeTrfase_TrmJ/LasT"/>
</dbReference>
<dbReference type="InterPro" id="IPR001537">
    <property type="entry name" value="SpoU_MeTrfase"/>
</dbReference>
<dbReference type="InterPro" id="IPR029026">
    <property type="entry name" value="tRNA_m1G_MTases_N"/>
</dbReference>
<dbReference type="NCBIfam" id="NF011694">
    <property type="entry name" value="PRK15114.1"/>
    <property type="match status" value="1"/>
</dbReference>
<dbReference type="NCBIfam" id="TIGR00050">
    <property type="entry name" value="rRNA_methyl_1"/>
    <property type="match status" value="1"/>
</dbReference>
<dbReference type="PANTHER" id="PTHR42786:SF2">
    <property type="entry name" value="TRNA (CYTIDINE_URIDINE-2'-O-)-METHYLTRANSFERASE TRMJ"/>
    <property type="match status" value="1"/>
</dbReference>
<dbReference type="PANTHER" id="PTHR42786">
    <property type="entry name" value="TRNA/RRNA METHYLTRANSFERASE"/>
    <property type="match status" value="1"/>
</dbReference>
<dbReference type="Pfam" id="PF00588">
    <property type="entry name" value="SpoU_methylase"/>
    <property type="match status" value="1"/>
</dbReference>
<dbReference type="PIRSF" id="PIRSF004808">
    <property type="entry name" value="LasT"/>
    <property type="match status" value="1"/>
</dbReference>
<dbReference type="SUPFAM" id="SSF75217">
    <property type="entry name" value="alpha/beta knot"/>
    <property type="match status" value="1"/>
</dbReference>
<evidence type="ECO:0000250" key="1">
    <source>
        <dbReference type="UniProtKB" id="P0AE01"/>
    </source>
</evidence>
<evidence type="ECO:0000305" key="2"/>
<keyword id="KW-0963">Cytoplasm</keyword>
<keyword id="KW-0489">Methyltransferase</keyword>
<keyword id="KW-0949">S-adenosyl-L-methionine</keyword>
<keyword id="KW-0808">Transferase</keyword>
<keyword id="KW-0819">tRNA processing</keyword>
<reference key="1">
    <citation type="journal article" date="2005" name="Nucleic Acids Res.">
        <title>The genome sequence of Salmonella enterica serovar Choleraesuis, a highly invasive and resistant zoonotic pathogen.</title>
        <authorList>
            <person name="Chiu C.-H."/>
            <person name="Tang P."/>
            <person name="Chu C."/>
            <person name="Hu S."/>
            <person name="Bao Q."/>
            <person name="Yu J."/>
            <person name="Chou Y.-Y."/>
            <person name="Wang H.-S."/>
            <person name="Lee Y.-S."/>
        </authorList>
    </citation>
    <scope>NUCLEOTIDE SEQUENCE [LARGE SCALE GENOMIC DNA]</scope>
    <source>
        <strain>SC-B67</strain>
    </source>
</reference>
<sequence>MLQNIRIVLVETSHTGNMGSVARAMKTMGLTNLWLVNPLVKPDSQAIALAAGASDVIGNAQIVDTLDEALAGCSLVVGTSARSRTLPWPMLDPRECGLKSVAEAANTPVALVFGRERVGLTNDELQKCHYHVAIAANPEYSSLNLAMAVQVIAYEVRMAWLATQENGDAADHEEMPYPLVDDLERFYGHLEQTLLSTGFIRENHPGQVMNKLRRLFTRARPESQELNILRGILASIEQQNKGK</sequence>
<name>TRMJ_SALCH</name>
<gene>
    <name type="primary">trmJ</name>
    <name type="ordered locus">SCH_2539</name>
</gene>
<organism>
    <name type="scientific">Salmonella choleraesuis (strain SC-B67)</name>
    <dbReference type="NCBI Taxonomy" id="321314"/>
    <lineage>
        <taxon>Bacteria</taxon>
        <taxon>Pseudomonadati</taxon>
        <taxon>Pseudomonadota</taxon>
        <taxon>Gammaproteobacteria</taxon>
        <taxon>Enterobacterales</taxon>
        <taxon>Enterobacteriaceae</taxon>
        <taxon>Salmonella</taxon>
    </lineage>
</organism>
<protein>
    <recommendedName>
        <fullName evidence="1">tRNA (cytidine/uridine-2'-O-)-methyltransferase TrmJ</fullName>
        <ecNumber evidence="1">2.1.1.200</ecNumber>
    </recommendedName>
    <alternativeName>
        <fullName evidence="1">tRNA (cytidine(32)/uridine(32)-2'-O)-methyltransferase</fullName>
    </alternativeName>
    <alternativeName>
        <fullName evidence="1">tRNA Cm32/Um32 methyltransferase</fullName>
    </alternativeName>
</protein>
<accession>Q57LG7</accession>